<reference key="1">
    <citation type="submission" date="2003-08" db="EMBL/GenBank/DDBJ databases">
        <authorList>
            <consortium name="NIH - Xenopus Gene Collection (XGC) project"/>
        </authorList>
    </citation>
    <scope>NUCLEOTIDE SEQUENCE [LARGE SCALE MRNA]</scope>
    <source>
        <tissue>Ovary</tissue>
    </source>
</reference>
<evidence type="ECO:0000250" key="1">
    <source>
        <dbReference type="UniProtKB" id="Q9Y294"/>
    </source>
</evidence>
<evidence type="ECO:0000305" key="2"/>
<sequence>MAKVQILNMVVLDNPCPFHNPFQFEITFECIEDLPDDLEWKIIYVGSAESEEYDQTLDSVLVGPVPAGRHMFVFQADAPNCSLIPESDAVGVTVVLITCTYRGQEFIRVGYYVNNEYSDPELRENPPLKAHFGQLQRNILASNPRVTRFHINWECTSEAKMEDIENVDPASNTMLPPNCAPSKGLAAALNTLPENSMDCM</sequence>
<feature type="chain" id="PRO_0000284021" description="Histone chaperone asf1a-B">
    <location>
        <begin position="1"/>
        <end position="200"/>
    </location>
</feature>
<name>AS1AB_XENLA</name>
<comment type="function">
    <text evidence="1">Histone chaperone that facilitates histone deposition and histone exchange and removal during nucleosome assembly and disassembly.</text>
</comment>
<comment type="subunit">
    <text evidence="1">Interacts with histone H3 (including both histone H3.1 and H3.3) and histone H4.</text>
</comment>
<comment type="subcellular location">
    <subcellularLocation>
        <location evidence="1">Nucleus</location>
    </subcellularLocation>
</comment>
<comment type="similarity">
    <text evidence="2">Belongs to the ASF1 family.</text>
</comment>
<accession>Q7T0M6</accession>
<dbReference type="EMBL" id="BC056123">
    <property type="protein sequence ID" value="AAH56123.1"/>
    <property type="molecule type" value="mRNA"/>
</dbReference>
<dbReference type="RefSeq" id="NP_001080310.1">
    <property type="nucleotide sequence ID" value="NM_001086841.1"/>
</dbReference>
<dbReference type="SMR" id="Q7T0M6"/>
<dbReference type="BioGRID" id="98244">
    <property type="interactions" value="1"/>
</dbReference>
<dbReference type="DNASU" id="380002"/>
<dbReference type="GeneID" id="380002"/>
<dbReference type="KEGG" id="xla:380002"/>
<dbReference type="AGR" id="Xenbase:XB-GENE-6256602"/>
<dbReference type="CTD" id="380002"/>
<dbReference type="Xenbase" id="XB-GENE-6256602">
    <property type="gene designation" value="asf1b.L"/>
</dbReference>
<dbReference type="OMA" id="CALYKQQ"/>
<dbReference type="OrthoDB" id="29755at2759"/>
<dbReference type="Proteomes" id="UP000186698">
    <property type="component" value="Chromosome 3L"/>
</dbReference>
<dbReference type="Bgee" id="380002">
    <property type="expression patterns" value="Expressed in egg cell and 19 other cell types or tissues"/>
</dbReference>
<dbReference type="GO" id="GO:0000785">
    <property type="term" value="C:chromatin"/>
    <property type="evidence" value="ECO:0000318"/>
    <property type="project" value="GO_Central"/>
</dbReference>
<dbReference type="GO" id="GO:0005634">
    <property type="term" value="C:nucleus"/>
    <property type="evidence" value="ECO:0000318"/>
    <property type="project" value="GO_Central"/>
</dbReference>
<dbReference type="GO" id="GO:0042393">
    <property type="term" value="F:histone binding"/>
    <property type="evidence" value="ECO:0000318"/>
    <property type="project" value="GO_Central"/>
</dbReference>
<dbReference type="GO" id="GO:0006335">
    <property type="term" value="P:DNA replication-dependent chromatin assembly"/>
    <property type="evidence" value="ECO:0000318"/>
    <property type="project" value="GO_Central"/>
</dbReference>
<dbReference type="FunFam" id="2.60.40.1490:FF:000001">
    <property type="entry name" value="Histone chaperone ASF1"/>
    <property type="match status" value="1"/>
</dbReference>
<dbReference type="Gene3D" id="2.60.40.1490">
    <property type="entry name" value="Histone chaperone ASF1-like"/>
    <property type="match status" value="1"/>
</dbReference>
<dbReference type="InterPro" id="IPR006818">
    <property type="entry name" value="ASF1-like"/>
</dbReference>
<dbReference type="InterPro" id="IPR036747">
    <property type="entry name" value="ASF1-like_sf"/>
</dbReference>
<dbReference type="PANTHER" id="PTHR12040">
    <property type="entry name" value="ANTI-SILENCING PROTEIN 1"/>
    <property type="match status" value="1"/>
</dbReference>
<dbReference type="PANTHER" id="PTHR12040:SF22">
    <property type="entry name" value="HISTONE CHAPERONE ASF1B"/>
    <property type="match status" value="1"/>
</dbReference>
<dbReference type="Pfam" id="PF04729">
    <property type="entry name" value="ASF1_hist_chap"/>
    <property type="match status" value="1"/>
</dbReference>
<dbReference type="SUPFAM" id="SSF101546">
    <property type="entry name" value="ASF1-like"/>
    <property type="match status" value="1"/>
</dbReference>
<keyword id="KW-0143">Chaperone</keyword>
<keyword id="KW-0156">Chromatin regulator</keyword>
<keyword id="KW-0539">Nucleus</keyword>
<keyword id="KW-1185">Reference proteome</keyword>
<keyword id="KW-0804">Transcription</keyword>
<keyword id="KW-0805">Transcription regulation</keyword>
<proteinExistence type="evidence at transcript level"/>
<organism>
    <name type="scientific">Xenopus laevis</name>
    <name type="common">African clawed frog</name>
    <dbReference type="NCBI Taxonomy" id="8355"/>
    <lineage>
        <taxon>Eukaryota</taxon>
        <taxon>Metazoa</taxon>
        <taxon>Chordata</taxon>
        <taxon>Craniata</taxon>
        <taxon>Vertebrata</taxon>
        <taxon>Euteleostomi</taxon>
        <taxon>Amphibia</taxon>
        <taxon>Batrachia</taxon>
        <taxon>Anura</taxon>
        <taxon>Pipoidea</taxon>
        <taxon>Pipidae</taxon>
        <taxon>Xenopodinae</taxon>
        <taxon>Xenopus</taxon>
        <taxon>Xenopus</taxon>
    </lineage>
</organism>
<gene>
    <name type="primary">asf1ab</name>
    <name type="synonym">asf1a</name>
</gene>
<protein>
    <recommendedName>
        <fullName>Histone chaperone asf1a-B</fullName>
    </recommendedName>
    <alternativeName>
        <fullName>Anti-silencing function protein 1 homolog A-B</fullName>
    </alternativeName>
</protein>